<comment type="function">
    <text evidence="1">One of the primary rRNA binding proteins, it binds specifically to the 5'-end of 16S ribosomal RNA.</text>
</comment>
<comment type="subunit">
    <text evidence="1">Part of the 30S ribosomal subunit.</text>
</comment>
<comment type="similarity">
    <text evidence="1">Belongs to the universal ribosomal protein uS17 family.</text>
</comment>
<accession>Q6NJC6</accession>
<reference key="1">
    <citation type="journal article" date="2003" name="Nucleic Acids Res.">
        <title>The complete genome sequence and analysis of Corynebacterium diphtheriae NCTC13129.</title>
        <authorList>
            <person name="Cerdeno-Tarraga A.-M."/>
            <person name="Efstratiou A."/>
            <person name="Dover L.G."/>
            <person name="Holden M.T.G."/>
            <person name="Pallen M.J."/>
            <person name="Bentley S.D."/>
            <person name="Besra G.S."/>
            <person name="Churcher C.M."/>
            <person name="James K.D."/>
            <person name="De Zoysa A."/>
            <person name="Chillingworth T."/>
            <person name="Cronin A."/>
            <person name="Dowd L."/>
            <person name="Feltwell T."/>
            <person name="Hamlin N."/>
            <person name="Holroyd S."/>
            <person name="Jagels K."/>
            <person name="Moule S."/>
            <person name="Quail M.A."/>
            <person name="Rabbinowitsch E."/>
            <person name="Rutherford K.M."/>
            <person name="Thomson N.R."/>
            <person name="Unwin L."/>
            <person name="Whitehead S."/>
            <person name="Barrell B.G."/>
            <person name="Parkhill J."/>
        </authorList>
    </citation>
    <scope>NUCLEOTIDE SEQUENCE [LARGE SCALE GENOMIC DNA]</scope>
    <source>
        <strain>ATCC 700971 / NCTC 13129 / Biotype gravis</strain>
    </source>
</reference>
<proteinExistence type="inferred from homology"/>
<name>RS17_CORDI</name>
<dbReference type="EMBL" id="BX248355">
    <property type="protein sequence ID" value="CAE48991.1"/>
    <property type="molecule type" value="Genomic_DNA"/>
</dbReference>
<dbReference type="RefSeq" id="WP_004566753.1">
    <property type="nucleotide sequence ID" value="NC_002935.2"/>
</dbReference>
<dbReference type="SMR" id="Q6NJC6"/>
<dbReference type="STRING" id="257309.DIP0482"/>
<dbReference type="GeneID" id="29421706"/>
<dbReference type="KEGG" id="cdi:DIP0482"/>
<dbReference type="HOGENOM" id="CLU_073626_1_0_11"/>
<dbReference type="Proteomes" id="UP000002198">
    <property type="component" value="Chromosome"/>
</dbReference>
<dbReference type="GO" id="GO:0022627">
    <property type="term" value="C:cytosolic small ribosomal subunit"/>
    <property type="evidence" value="ECO:0007669"/>
    <property type="project" value="TreeGrafter"/>
</dbReference>
<dbReference type="GO" id="GO:0019843">
    <property type="term" value="F:rRNA binding"/>
    <property type="evidence" value="ECO:0007669"/>
    <property type="project" value="UniProtKB-UniRule"/>
</dbReference>
<dbReference type="GO" id="GO:0003735">
    <property type="term" value="F:structural constituent of ribosome"/>
    <property type="evidence" value="ECO:0007669"/>
    <property type="project" value="InterPro"/>
</dbReference>
<dbReference type="GO" id="GO:0006412">
    <property type="term" value="P:translation"/>
    <property type="evidence" value="ECO:0007669"/>
    <property type="project" value="UniProtKB-UniRule"/>
</dbReference>
<dbReference type="CDD" id="cd00364">
    <property type="entry name" value="Ribosomal_uS17"/>
    <property type="match status" value="1"/>
</dbReference>
<dbReference type="Gene3D" id="2.40.50.140">
    <property type="entry name" value="Nucleic acid-binding proteins"/>
    <property type="match status" value="1"/>
</dbReference>
<dbReference type="HAMAP" id="MF_01345_B">
    <property type="entry name" value="Ribosomal_uS17_B"/>
    <property type="match status" value="1"/>
</dbReference>
<dbReference type="InterPro" id="IPR012340">
    <property type="entry name" value="NA-bd_OB-fold"/>
</dbReference>
<dbReference type="InterPro" id="IPR000266">
    <property type="entry name" value="Ribosomal_uS17"/>
</dbReference>
<dbReference type="InterPro" id="IPR019984">
    <property type="entry name" value="Ribosomal_uS17_bact/chlr"/>
</dbReference>
<dbReference type="InterPro" id="IPR019979">
    <property type="entry name" value="Ribosomal_uS17_CS"/>
</dbReference>
<dbReference type="NCBIfam" id="NF004123">
    <property type="entry name" value="PRK05610.1"/>
    <property type="match status" value="1"/>
</dbReference>
<dbReference type="NCBIfam" id="TIGR03635">
    <property type="entry name" value="uS17_bact"/>
    <property type="match status" value="1"/>
</dbReference>
<dbReference type="PANTHER" id="PTHR10744">
    <property type="entry name" value="40S RIBOSOMAL PROTEIN S11 FAMILY MEMBER"/>
    <property type="match status" value="1"/>
</dbReference>
<dbReference type="PANTHER" id="PTHR10744:SF1">
    <property type="entry name" value="SMALL RIBOSOMAL SUBUNIT PROTEIN US17M"/>
    <property type="match status" value="1"/>
</dbReference>
<dbReference type="Pfam" id="PF00366">
    <property type="entry name" value="Ribosomal_S17"/>
    <property type="match status" value="1"/>
</dbReference>
<dbReference type="PRINTS" id="PR00973">
    <property type="entry name" value="RIBOSOMALS17"/>
</dbReference>
<dbReference type="SUPFAM" id="SSF50249">
    <property type="entry name" value="Nucleic acid-binding proteins"/>
    <property type="match status" value="1"/>
</dbReference>
<dbReference type="PROSITE" id="PS00056">
    <property type="entry name" value="RIBOSOMAL_S17"/>
    <property type="match status" value="1"/>
</dbReference>
<organism>
    <name type="scientific">Corynebacterium diphtheriae (strain ATCC 700971 / NCTC 13129 / Biotype gravis)</name>
    <dbReference type="NCBI Taxonomy" id="257309"/>
    <lineage>
        <taxon>Bacteria</taxon>
        <taxon>Bacillati</taxon>
        <taxon>Actinomycetota</taxon>
        <taxon>Actinomycetes</taxon>
        <taxon>Mycobacteriales</taxon>
        <taxon>Corynebacteriaceae</taxon>
        <taxon>Corynebacterium</taxon>
    </lineage>
</organism>
<keyword id="KW-1185">Reference proteome</keyword>
<keyword id="KW-0687">Ribonucleoprotein</keyword>
<keyword id="KW-0689">Ribosomal protein</keyword>
<keyword id="KW-0694">RNA-binding</keyword>
<keyword id="KW-0699">rRNA-binding</keyword>
<protein>
    <recommendedName>
        <fullName evidence="1">Small ribosomal subunit protein uS17</fullName>
    </recommendedName>
    <alternativeName>
        <fullName evidence="2">30S ribosomal protein S17</fullName>
    </alternativeName>
</protein>
<gene>
    <name evidence="1" type="primary">rpsQ</name>
    <name type="ordered locus">DIP0482</name>
</gene>
<evidence type="ECO:0000255" key="1">
    <source>
        <dbReference type="HAMAP-Rule" id="MF_01345"/>
    </source>
</evidence>
<evidence type="ECO:0000305" key="2"/>
<feature type="chain" id="PRO_0000233463" description="Small ribosomal subunit protein uS17">
    <location>
        <begin position="1"/>
        <end position="92"/>
    </location>
</feature>
<sequence>MSEANVNKKEKGARKVRTGYVVSDKMQKTIVVELEDRKSHAKYGKTIRTNSKVKAHDEKEIAGIGDLVRIEETRPLSKDKHFRLVEIVEKAK</sequence>